<dbReference type="EMBL" id="BX284601">
    <property type="protein sequence ID" value="CAB03121.3"/>
    <property type="molecule type" value="Genomic_DNA"/>
</dbReference>
<dbReference type="EMBL" id="BX284601">
    <property type="protein sequence ID" value="CAD56586.1"/>
    <property type="molecule type" value="Genomic_DNA"/>
</dbReference>
<dbReference type="EMBL" id="BX284601">
    <property type="protein sequence ID" value="CCH63796.1"/>
    <property type="molecule type" value="Genomic_DNA"/>
</dbReference>
<dbReference type="PIR" id="T22545">
    <property type="entry name" value="T22545"/>
</dbReference>
<dbReference type="RefSeq" id="NP_001250933.1">
    <molecule id="P90884-3"/>
    <property type="nucleotide sequence ID" value="NM_001264004.5"/>
</dbReference>
<dbReference type="RefSeq" id="NP_492405.3">
    <molecule id="P90884-1"/>
    <property type="nucleotide sequence ID" value="NM_060004.4"/>
</dbReference>
<dbReference type="RefSeq" id="NP_871884.1">
    <molecule id="P90884-2"/>
    <property type="nucleotide sequence ID" value="NM_182084.9"/>
</dbReference>
<dbReference type="FunCoup" id="P90884">
    <property type="interactions" value="140"/>
</dbReference>
<dbReference type="STRING" id="6239.F53B6.2a.1"/>
<dbReference type="GlyCosmos" id="P90884">
    <property type="glycosylation" value="6 sites, No reported glycans"/>
</dbReference>
<dbReference type="PaxDb" id="6239-F53B6.2a"/>
<dbReference type="EnsemblMetazoa" id="F53B6.2a.1">
    <molecule id="P90884-1"/>
    <property type="protein sequence ID" value="F53B6.2a.1"/>
    <property type="gene ID" value="WBGene00009958"/>
</dbReference>
<dbReference type="EnsemblMetazoa" id="F53B6.2b.1">
    <molecule id="P90884-2"/>
    <property type="protein sequence ID" value="F53B6.2b.1"/>
    <property type="gene ID" value="WBGene00009958"/>
</dbReference>
<dbReference type="EnsemblMetazoa" id="F53B6.2c.1">
    <molecule id="P90884-3"/>
    <property type="protein sequence ID" value="F53B6.2c.1"/>
    <property type="gene ID" value="WBGene00009958"/>
</dbReference>
<dbReference type="GeneID" id="172706"/>
<dbReference type="KEGG" id="cel:CELE_F53B6.2"/>
<dbReference type="UCSC" id="F53B6.2b">
    <property type="organism name" value="c. elegans"/>
</dbReference>
<dbReference type="AGR" id="WB:WBGene00009958"/>
<dbReference type="CTD" id="172706"/>
<dbReference type="WormBase" id="F53B6.2a">
    <molecule id="P90884-1"/>
    <property type="protein sequence ID" value="CE36859"/>
    <property type="gene ID" value="WBGene00009958"/>
    <property type="gene designation" value="madd-4"/>
</dbReference>
<dbReference type="WormBase" id="F53B6.2b">
    <molecule id="P90884-2"/>
    <property type="protein sequence ID" value="CE32429"/>
    <property type="gene ID" value="WBGene00009958"/>
    <property type="gene designation" value="madd-4"/>
</dbReference>
<dbReference type="WormBase" id="F53B6.2c">
    <molecule id="P90884-3"/>
    <property type="protein sequence ID" value="CE32428"/>
    <property type="gene ID" value="WBGene00009958"/>
    <property type="gene designation" value="madd-4"/>
</dbReference>
<dbReference type="eggNOG" id="KOG3538">
    <property type="taxonomic scope" value="Eukaryota"/>
</dbReference>
<dbReference type="InParanoid" id="P90884"/>
<dbReference type="OMA" id="ECDANTK"/>
<dbReference type="OrthoDB" id="5948003at2759"/>
<dbReference type="PhylomeDB" id="P90884"/>
<dbReference type="PRO" id="PR:P90884"/>
<dbReference type="Proteomes" id="UP000001940">
    <property type="component" value="Chromosome I"/>
</dbReference>
<dbReference type="Bgee" id="WBGene00009958">
    <property type="expression patterns" value="Expressed in larva and 3 other cell types or tissues"/>
</dbReference>
<dbReference type="GO" id="GO:0030424">
    <property type="term" value="C:axon"/>
    <property type="evidence" value="ECO:0007669"/>
    <property type="project" value="UniProtKB-SubCell"/>
</dbReference>
<dbReference type="GO" id="GO:0005615">
    <property type="term" value="C:extracellular space"/>
    <property type="evidence" value="ECO:0000314"/>
    <property type="project" value="WormBase"/>
</dbReference>
<dbReference type="GO" id="GO:0045202">
    <property type="term" value="C:synapse"/>
    <property type="evidence" value="ECO:0007669"/>
    <property type="project" value="UniProtKB-SubCell"/>
</dbReference>
<dbReference type="GO" id="GO:0005102">
    <property type="term" value="F:signaling receptor binding"/>
    <property type="evidence" value="ECO:0000353"/>
    <property type="project" value="WormBase"/>
</dbReference>
<dbReference type="GO" id="GO:0033563">
    <property type="term" value="P:dorsal/ventral axon guidance"/>
    <property type="evidence" value="ECO:0000316"/>
    <property type="project" value="WormBase"/>
</dbReference>
<dbReference type="GO" id="GO:0030198">
    <property type="term" value="P:extracellular matrix organization"/>
    <property type="evidence" value="ECO:0007669"/>
    <property type="project" value="InterPro"/>
</dbReference>
<dbReference type="GO" id="GO:0050808">
    <property type="term" value="P:synapse organization"/>
    <property type="evidence" value="ECO:0000315"/>
    <property type="project" value="WormBase"/>
</dbReference>
<dbReference type="FunFam" id="2.20.100.10:FF:000005">
    <property type="entry name" value="ADAM metallopeptidase with thrombospondin type 1 motif 9"/>
    <property type="match status" value="1"/>
</dbReference>
<dbReference type="FunFam" id="2.20.100.10:FF:000009">
    <property type="entry name" value="ADAMTS-like protein 3 isoform A"/>
    <property type="match status" value="1"/>
</dbReference>
<dbReference type="Gene3D" id="2.60.40.10">
    <property type="entry name" value="Immunoglobulins"/>
    <property type="match status" value="1"/>
</dbReference>
<dbReference type="Gene3D" id="2.20.100.10">
    <property type="entry name" value="Thrombospondin type-1 (TSP1) repeat"/>
    <property type="match status" value="7"/>
</dbReference>
<dbReference type="InterPro" id="IPR013273">
    <property type="entry name" value="ADAMTS/ADAMTS-like"/>
</dbReference>
<dbReference type="InterPro" id="IPR050439">
    <property type="entry name" value="ADAMTS_ADAMTS-like"/>
</dbReference>
<dbReference type="InterPro" id="IPR007110">
    <property type="entry name" value="Ig-like_dom"/>
</dbReference>
<dbReference type="InterPro" id="IPR036179">
    <property type="entry name" value="Ig-like_dom_sf"/>
</dbReference>
<dbReference type="InterPro" id="IPR013783">
    <property type="entry name" value="Ig-like_fold"/>
</dbReference>
<dbReference type="InterPro" id="IPR003599">
    <property type="entry name" value="Ig_sub"/>
</dbReference>
<dbReference type="InterPro" id="IPR003598">
    <property type="entry name" value="Ig_sub2"/>
</dbReference>
<dbReference type="InterPro" id="IPR010909">
    <property type="entry name" value="PLAC"/>
</dbReference>
<dbReference type="InterPro" id="IPR000884">
    <property type="entry name" value="TSP1_rpt"/>
</dbReference>
<dbReference type="InterPro" id="IPR036383">
    <property type="entry name" value="TSP1_rpt_sf"/>
</dbReference>
<dbReference type="PANTHER" id="PTHR13723">
    <property type="entry name" value="ADAMTS A DISINTEGRIN AND METALLOPROTEASE WITH THROMBOSPONDIN MOTIFS PROTEASE"/>
    <property type="match status" value="1"/>
</dbReference>
<dbReference type="PANTHER" id="PTHR13723:SF305">
    <property type="entry name" value="PROTEIN MADD-4"/>
    <property type="match status" value="1"/>
</dbReference>
<dbReference type="Pfam" id="PF13927">
    <property type="entry name" value="Ig_3"/>
    <property type="match status" value="1"/>
</dbReference>
<dbReference type="Pfam" id="PF19030">
    <property type="entry name" value="TSP1_ADAMTS"/>
    <property type="match status" value="8"/>
</dbReference>
<dbReference type="Pfam" id="PF00090">
    <property type="entry name" value="TSP_1"/>
    <property type="match status" value="1"/>
</dbReference>
<dbReference type="PRINTS" id="PR01857">
    <property type="entry name" value="ADAMTSFAMILY"/>
</dbReference>
<dbReference type="SMART" id="SM00409">
    <property type="entry name" value="IG"/>
    <property type="match status" value="1"/>
</dbReference>
<dbReference type="SMART" id="SM00408">
    <property type="entry name" value="IGc2"/>
    <property type="match status" value="1"/>
</dbReference>
<dbReference type="SMART" id="SM00209">
    <property type="entry name" value="TSP1"/>
    <property type="match status" value="9"/>
</dbReference>
<dbReference type="SUPFAM" id="SSF48726">
    <property type="entry name" value="Immunoglobulin"/>
    <property type="match status" value="1"/>
</dbReference>
<dbReference type="SUPFAM" id="SSF82895">
    <property type="entry name" value="TSP-1 type 1 repeat"/>
    <property type="match status" value="9"/>
</dbReference>
<dbReference type="PROSITE" id="PS50835">
    <property type="entry name" value="IG_LIKE"/>
    <property type="match status" value="1"/>
</dbReference>
<dbReference type="PROSITE" id="PS50900">
    <property type="entry name" value="PLAC"/>
    <property type="match status" value="1"/>
</dbReference>
<dbReference type="PROSITE" id="PS50092">
    <property type="entry name" value="TSP1"/>
    <property type="match status" value="6"/>
</dbReference>
<gene>
    <name evidence="14" type="primary">madd-4</name>
    <name evidence="14" type="ORF">F53B6.2</name>
</gene>
<comment type="function">
    <text evidence="6 7 8 9 10">Component of an extracellular matrix cue that is involved in the guidance of dorsoventral midline migrations and in the specification of postsynaptic domains at neuromuscular junctions (NMJs) (PubMed:22014523, PubMed:24896188, PubMed:25122090, PubMed:26028574, PubMed:26028575). Acts as a ligand for the netrin receptor unc-40 and the neuroligin receptor nlg-1 (PubMed:22014523, PubMed:24896188, PubMed:25122090, PubMed:26028575). Secreted by the dorsal and ventral nerve cords to attract sensory axons and muscle membrane extensions called muscle arms (PubMed:22014523). In parallel with unc-6 and slt-1, involved in the netrin receptor unc-40 dependent guidance of the AVM and PVM mechanosensory axons along the dorsal-ventral axis (PubMed:22014523). The unc-40 coreceptor eva-1 is enhancing the responsiveness of unc-40 to the madd-4 guidance cue to attract the muscle arm extensions and AVM mechanosensory axons towards the dorsoventral midline (PubMed:25122090). Acts as a synaptic organizer and is required for the specification of inhibitory GABAergic and excitatory cholinergic identities of postsynaptic domains at neuromuscular junctions (NMJs) (PubMed:24896188, PubMed:26028574, PubMed:26028575). Required for the recruitment of unc-40 to both cholinergic and GABAergic NMJs (PubMed:26028575). Promotes the clustering of ACh receptors and GABA(A) receptors at postsynaptic sites during synaptogenesis (PubMed:24896188). The binding to the presynaptic adhesion protein nrx-1 and to the neuroligin nlg-1 at postsynaptic sites promotes clustering of GABAergic receptors at postsynaptic NMJs, thereby contributing to normal GABAergic synaptic transmission (PubMed:26028574).</text>
</comment>
<comment type="function">
    <text evidence="7">Isoform a and isoform c: Promotes the clustering of acetylcholine receptors (AChR) at excitatory cholinergic synapses of NMJs via the netrin receptor unc-40.</text>
</comment>
<comment type="function">
    <molecule>Isoform b</molecule>
    <text evidence="6 7 8 9 10">Acts as a guidance cue in the attraction of muscle membrane extensions (muscle arms) to the dorsal cord and in cooperation with unc-6 to the ventral cord via the netrin receptor unc-40 and via the unc-40 coreceptor eva-1 (PubMed:22014523, PubMed:25122090). Together with nrx-1, clusters netrin receptor unc-40 and neuroligin nlg-1 at postsynaptic sites of GABAergic NMJs, thereby promoting the recruitment of GABA(A) receptors at GABAergic synapses (PubMed:24896188, PubMed:26028574, PubMed:26028575). Prevents the recruitment of GABAergic receptors to cholinergic synapses (PubMed:24896188).</text>
</comment>
<comment type="subunit">
    <text evidence="7 8 9 10">Interacts with eva-1 (via the SUEL-type lectin domain) (PubMed:25122090). Interacts with unc-5 (PubMed:25122090). Interacts with unc-40; the interaction is required for the localization of unc-40 to postsynaptic domains (PubMed:25122090, PubMed:26028575). Isoform a forms homodimers and heterodimers with isoform b (PubMed:24896188). Isoform b forms homodimers and heterodimers with isoform a (PubMed:24896188). Isoform b interacts with nlg-1 (via extracellular domain); the interaction is required for nlg-1 localization to postsynaptic domains (PubMed:26028574, PubMed:26028575). Isoform b interacts (via the Ig-like C2-type domain) with nrx-1 (via C-terminus) (PubMed:26028574).</text>
</comment>
<comment type="subcellular location">
    <subcellularLocation>
        <location evidence="6 7">Cell projection</location>
        <location evidence="6 7">Axon</location>
    </subcellularLocation>
    <subcellularLocation>
        <location evidence="6 7">Secreted</location>
    </subcellularLocation>
    <subcellularLocation>
        <location evidence="7">Synapse</location>
    </subcellularLocation>
    <subcellularLocation>
        <location evidence="6 7">Secreted</location>
        <location evidence="6 7">Extracellular space</location>
        <location evidence="6 7">Extracellular matrix</location>
    </subcellularLocation>
    <text evidence="6 7">Isoform b is secreted by cholinergic and GABAergic motoneurons and localizes to excitatory cholinergic and inhibitory GABAergic NMJs, whereas isoform a and isoform c are exclusively secreted by cholinergic motoneurons and localize to excitatory cholinergic NMJs.</text>
</comment>
<comment type="alternative products">
    <event type="alternative promoter"/>
    <event type="alternative splicing"/>
    <isoform>
        <id>P90884-1</id>
        <name evidence="14">a</name>
        <sequence type="displayed"/>
    </isoform>
    <isoform>
        <id>P90884-2</id>
        <name evidence="15">b</name>
        <sequence type="described" ref="VSP_059274"/>
    </isoform>
    <isoform>
        <id>P90884-3</id>
        <name evidence="16">c</name>
        <sequence type="described" ref="VSP_059275"/>
    </isoform>
</comment>
<comment type="tissue specificity">
    <text evidence="6 7">Isoform a: Expressed in the commissural GABAergic and cholinergic motor neurons in the first larval stage but only in the cholinergic motor neurons in later larval stages and in adult animals (PubMed:22014523). At the L1 larval stage, mainly localized at the nerve ring and at the dorsal cord (PubMed:24896188). Isoform b: Expressed in the commissural GABAergic and cholinergic motor neurons whose cell bodies reside in the ventral nerve cord and which extend axons into the ventral and dorsal nerve cord (PubMed:22014523, PubMed:24896188). Also expressed in the head neurons RIA, RIC, lateral IL1s, lateral IL2s, OLLs, RMEs and SABs, all of which extend axons into the nerve ring (PubMed:22014523, PubMed:24896188). Expressed in the embryogenic blast cells and the corresponding terminally differentiated ventral cord motor neurons and head neurons (PubMed:22014523).</text>
</comment>
<comment type="developmental stage">
    <text evidence="6">Isoform a: Expressed in larval stages L1 and L2 and in adult animals. Isoform b: Expressed in embryos, larval stages L1 and L2 and in adult animals.</text>
</comment>
<comment type="domain">
    <text evidence="6">The Ig-like C2-type domain is required for the attraction of the muscle arm extensions.</text>
</comment>
<comment type="disruption phenotype">
    <text evidence="6 7 10">Disrupts the clustering of the cholinergic receptor subunits unc-29, unc-38 and acr-16 and the GABAergic receptor subunit unc-49 at postsynaptic domains of neuromuscular junctions (NMJs), and the receptors are redistributed to extrasynaptic areas (PubMed:24896188, PubMed:26028575). Loss of neuroligin receptor nlg-1 and netrin receptor unc-40 localization to NMJs (PubMed:26028575). Isoform a and isoform c: Defects in AChR localization to cholinergic synapses (PubMed:24896188). Decreased AChR-dependent currents triggered by motoneuron stimulation (PubMed:24896188). Isoform b: Extensive dorsal muscle arm extension defects and weaker ventral muscle arm extension defects (PubMed:22014523, PubMed:24896188). Relocalization of GABAergic receptors from GABAergic to cholinergic synapses (PubMed:24896188, PubMed:26028575). Redistribution of the neuroligin receptor nlg-1 from GABAergic to cholinergic NMJs (PubMed:26028575). In a unc-6 mutant background, extensive ventral muscle arm extension defects (PubMed:22014523). Loss of unc-40 localization at GABAergic NMJs (PubMed:26028575).</text>
</comment>
<comment type="miscellaneous">
    <molecule>Isoform b</molecule>
    <text evidence="12">Produced by alternative promoter usage.</text>
</comment>
<comment type="miscellaneous">
    <molecule>Isoform c</molecule>
    <text evidence="12">Produced by alternative splicing of isoform a.</text>
</comment>
<sequence>MKCSYTVVFLLFYLLIASFHVDALSWAAWSPWSSCTKTCGGGVSRQLRRCLTSKCSGESVRFKVCAQKTCESKSRLARDTICGGEEIVSRGQCEVVCRSRLTGANFLWRVDDGTPCQAATSRAVCSKGSCQIVGCDGLISSSFRFDACGVCGGRGDTCDNGKFIWKVSEEYTACASNCDDIVDWSGAGRSIASTSQPIVVCVNAITGRVVPEKLCADKLRPKVEARPCPMLICPSRCRWMAADWTECVPHCGEGTRKREVYCVQTAHNVTVHVPDTFCENGTRPAAEENCVSTSCGRWEAGKWSKCTASCGQGVRRRHVACVGGSDCDEGGRPRQETTCYAGIPCSIATNSLDWNDRAYLDGNTFGSMDNHNDWQAPRLVAGEWSTCSSTCGTGVMSRTVECVAVNPISSAPIKLPMSECQDQEQPKLFESCEVRSCPLQEDSKLSEDEAPYQWRYGDWTQCSASCLGGKQKAALKCIQVSTGKSVQWSQCDARRRPPEKSRPCNQHPCPPFWLTSKYSDCSMSCGSGTARRSVKCAQTVSKTDGADAHIVLRDDRCHFKKPQETETCNVVACPATWVTAQWTECSRSCDSGERRRQVWCEIRDSRGKTQRRPDVECDANTKPQTVEVCSFGSCSRPELLSNRVFEQNAEQKKLTLGIGGVATLYQGTSIKIKCPAKKFDKKKIYWKKNGKKIKNDAHIKVSANGNLRVFHARMEDAGVYECFTDRLQGNVTLNFKYRDFPASRVDLAPKPQIPSTKNRQRVQVSKEDVLREQASVLHKMNVSLIEALLTAPNDEKAREQLRKYGNELVARWDIGHWSECRQKTCHVAGYQARGISCKVTFHGEIRNVDNSICESLASVRPPETRPCHREDCPRWEASQWSECSSQRCVSSMLAQKRRNVTCRFTNGTSVDIQHCDITNRPATTMDCPNQNCKAEWRTSDWGSCSSECGTGGVQLRLLSCVWISSGRPAGRNCEQMRRPHSARACVADEPLPPCMPTASALYQRDASCQDQSRFCDIIKLFHSCDSLEVRQKCCSTCTFVERKKF</sequence>
<accession>P90884</accession>
<accession>I2HA89</accession>
<accession>Q8I4I1</accession>
<proteinExistence type="evidence at protein level"/>
<keyword id="KW-0877">Alternative promoter usage</keyword>
<keyword id="KW-0025">Alternative splicing</keyword>
<keyword id="KW-0966">Cell projection</keyword>
<keyword id="KW-1015">Disulfide bond</keyword>
<keyword id="KW-0272">Extracellular matrix</keyword>
<keyword id="KW-0325">Glycoprotein</keyword>
<keyword id="KW-0393">Immunoglobulin domain</keyword>
<keyword id="KW-1185">Reference proteome</keyword>
<keyword id="KW-0677">Repeat</keyword>
<keyword id="KW-0964">Secreted</keyword>
<keyword id="KW-0732">Signal</keyword>
<keyword id="KW-0770">Synapse</keyword>
<protein>
    <recommendedName>
        <fullName evidence="12">Protein madd-4</fullName>
    </recommendedName>
    <alternativeName>
        <fullName evidence="11">Punctin</fullName>
    </alternativeName>
</protein>
<organism evidence="13">
    <name type="scientific">Caenorhabditis elegans</name>
    <dbReference type="NCBI Taxonomy" id="6239"/>
    <lineage>
        <taxon>Eukaryota</taxon>
        <taxon>Metazoa</taxon>
        <taxon>Ecdysozoa</taxon>
        <taxon>Nematoda</taxon>
        <taxon>Chromadorea</taxon>
        <taxon>Rhabditida</taxon>
        <taxon>Rhabditina</taxon>
        <taxon>Rhabditomorpha</taxon>
        <taxon>Rhabditoidea</taxon>
        <taxon>Rhabditidae</taxon>
        <taxon>Peloderinae</taxon>
        <taxon>Caenorhabditis</taxon>
    </lineage>
</organism>
<feature type="signal peptide" evidence="1">
    <location>
        <begin position="1"/>
        <end position="23"/>
    </location>
</feature>
<feature type="chain" id="PRO_5004161775" description="Protein madd-4" evidence="1">
    <location>
        <begin position="24"/>
        <end position="1045"/>
    </location>
</feature>
<feature type="domain" description="TSP type-1 1" evidence="3">
    <location>
        <begin position="24"/>
        <end position="71"/>
    </location>
</feature>
<feature type="domain" description="TSP type-1 2" evidence="3">
    <location>
        <begin position="236"/>
        <end position="292"/>
    </location>
</feature>
<feature type="domain" description="TSP type-1 3" evidence="3">
    <location>
        <begin position="294"/>
        <end position="510"/>
    </location>
</feature>
<feature type="domain" description="TSP type-1 4" evidence="3">
    <location>
        <begin position="512"/>
        <end position="572"/>
    </location>
</feature>
<feature type="domain" description="TSP type-1 5" evidence="1">
    <location>
        <begin position="576"/>
        <end position="635"/>
    </location>
</feature>
<feature type="domain" description="Ig-like C2-type" evidence="2">
    <location>
        <begin position="637"/>
        <end position="732"/>
    </location>
</feature>
<feature type="domain" description="TSP type-1 6" evidence="1">
    <location>
        <begin position="811"/>
        <end position="873"/>
    </location>
</feature>
<feature type="domain" description="TSP type-1 7" evidence="3">
    <location>
        <begin position="932"/>
        <end position="990"/>
    </location>
</feature>
<feature type="domain" description="PLAC" evidence="4">
    <location>
        <begin position="1004"/>
        <end position="1041"/>
    </location>
</feature>
<feature type="glycosylation site" description="N-linked (GlcNAc...) asparagine" evidence="5">
    <location>
        <position position="268"/>
    </location>
</feature>
<feature type="glycosylation site" description="N-linked (GlcNAc...) asparagine" evidence="5">
    <location>
        <position position="280"/>
    </location>
</feature>
<feature type="glycosylation site" description="N-linked (GlcNAc...) asparagine" evidence="5">
    <location>
        <position position="730"/>
    </location>
</feature>
<feature type="glycosylation site" description="N-linked (GlcNAc...) asparagine" evidence="5">
    <location>
        <position position="781"/>
    </location>
</feature>
<feature type="glycosylation site" description="N-linked (GlcNAc...) asparagine" evidence="5">
    <location>
        <position position="899"/>
    </location>
</feature>
<feature type="glycosylation site" description="N-linked (GlcNAc...) asparagine" evidence="5">
    <location>
        <position position="906"/>
    </location>
</feature>
<feature type="disulfide bond" evidence="3">
    <location>
        <begin position="35"/>
        <end position="65"/>
    </location>
</feature>
<feature type="disulfide bond" evidence="3">
    <location>
        <begin position="39"/>
        <end position="70"/>
    </location>
</feature>
<feature type="disulfide bond" evidence="3">
    <location>
        <begin position="50"/>
        <end position="55"/>
    </location>
</feature>
<feature type="disulfide bond" evidence="2">
    <location>
        <begin position="674"/>
        <end position="722"/>
    </location>
</feature>
<feature type="splice variant" id="VSP_059274" description="In isoform b." evidence="12">
    <original>MKCSYTVVFLLFYLLIASFHVDALSWAAWSPWSSCTKTCGGGVSRQLRRCLTSKCSGESVRFKVCAQKTCESKSRLARDTICGGEEIVSRGQCEVVCRSRLTGANFLWRVDDGTPCQAATSRAVCSKGSCQIVGCDGLISSSFRFDACGVCGGRGDTCDNGKFIWKVSEEYTACASNCDDIVDWSGAGRSIASTSQPIVVCVNAITGRVVPEKLCADKLRPKVEARPCPMLICPSRCRWMAADWTECVPHCGEGTRKREVYCVQTAHNVTVHVPDTFCENGTRPAAEENCVSTSCGRWEAGKWSKCTASCGQGVRRRHVACVGGSDCDEGGRPRQETTCYAGIPCSIATNS</original>
    <variation>MLPLLLILSAPLGVSAF</variation>
    <location>
        <begin position="1"/>
        <end position="351"/>
    </location>
</feature>
<feature type="splice variant" id="VSP_059275" description="In isoform c." evidence="12">
    <location>
        <begin position="237"/>
        <end position="238"/>
    </location>
</feature>
<feature type="mutagenesis site" description="Disrupts the attraction of the muscle arm extensions." evidence="6">
    <original>R</original>
    <variation>H</variation>
    <location>
        <position position="398"/>
    </location>
</feature>
<evidence type="ECO:0000255" key="1"/>
<evidence type="ECO:0000255" key="2">
    <source>
        <dbReference type="PROSITE-ProRule" id="PRU00114"/>
    </source>
</evidence>
<evidence type="ECO:0000255" key="3">
    <source>
        <dbReference type="PROSITE-ProRule" id="PRU00210"/>
    </source>
</evidence>
<evidence type="ECO:0000255" key="4">
    <source>
        <dbReference type="PROSITE-ProRule" id="PRU00233"/>
    </source>
</evidence>
<evidence type="ECO:0000255" key="5">
    <source>
        <dbReference type="PROSITE-ProRule" id="PRU00498"/>
    </source>
</evidence>
<evidence type="ECO:0000269" key="6">
    <source>
    </source>
</evidence>
<evidence type="ECO:0000269" key="7">
    <source>
    </source>
</evidence>
<evidence type="ECO:0000269" key="8">
    <source>
    </source>
</evidence>
<evidence type="ECO:0000269" key="9">
    <source>
    </source>
</evidence>
<evidence type="ECO:0000269" key="10">
    <source>
    </source>
</evidence>
<evidence type="ECO:0000303" key="11">
    <source>
    </source>
</evidence>
<evidence type="ECO:0000305" key="12"/>
<evidence type="ECO:0000312" key="13">
    <source>
        <dbReference type="Proteomes" id="UP000001940"/>
    </source>
</evidence>
<evidence type="ECO:0000312" key="14">
    <source>
        <dbReference type="WormBase" id="F53B6.2a"/>
    </source>
</evidence>
<evidence type="ECO:0000312" key="15">
    <source>
        <dbReference type="WormBase" id="F53B6.2b"/>
    </source>
</evidence>
<evidence type="ECO:0000312" key="16">
    <source>
        <dbReference type="WormBase" id="F53B6.2c"/>
    </source>
</evidence>
<name>MADD4_CAEEL</name>
<reference evidence="13" key="1">
    <citation type="journal article" date="1998" name="Science">
        <title>Genome sequence of the nematode C. elegans: a platform for investigating biology.</title>
        <authorList>
            <consortium name="The C. elegans sequencing consortium"/>
        </authorList>
    </citation>
    <scope>NUCLEOTIDE SEQUENCE [LARGE SCALE GENOMIC DNA]</scope>
    <source>
        <strain evidence="13">Bristol N2</strain>
    </source>
</reference>
<reference evidence="12" key="2">
    <citation type="journal article" date="2011" name="Dev. Cell">
        <title>MADD-4 is a secreted cue required for midline-oriented guidance in Caenorhabditis elegans.</title>
        <authorList>
            <person name="Seetharaman A."/>
            <person name="Selman G."/>
            <person name="Puckrin R."/>
            <person name="Barbier L."/>
            <person name="Wong E."/>
            <person name="D'Souza S.A."/>
            <person name="Roy P.J."/>
        </authorList>
    </citation>
    <scope>ALTERNATIVE PROMOTER USAGE (ISOFORMS A AND B)</scope>
    <scope>FUNCTION</scope>
    <scope>SUBCELLULAR LOCATION</scope>
    <scope>TISSUE SPECIFICITY</scope>
    <scope>DEVELOPMENTAL STAGE</scope>
    <scope>DOMAIN</scope>
    <scope>DISRUPTION PHENOTYPE</scope>
    <scope>MUTAGENESIS OF ARG-398</scope>
</reference>
<reference evidence="12" key="3">
    <citation type="journal article" date="2014" name="Nature">
        <title>C. elegans Punctin specifies cholinergic versus GABAergic identity of postsynaptic domains.</title>
        <authorList>
            <person name="Pinan-Lucarre B."/>
            <person name="Tu H."/>
            <person name="Pierron M."/>
            <person name="Cruceyra P.I."/>
            <person name="Zhan H."/>
            <person name="Stigloher C."/>
            <person name="Richmond J.E."/>
            <person name="Bessereau J.L."/>
        </authorList>
    </citation>
    <scope>ALTERNATIVE PROMOTER USAGE (ISOFORMS A AND B)</scope>
    <scope>ALTERNATIVE SPLICING (ISOFORMS A AND C)</scope>
    <scope>FUNCTION</scope>
    <scope>SUBUNIT</scope>
    <scope>SUBCELLULAR LOCATION</scope>
    <scope>TISSUE SPECIFICITY</scope>
    <scope>DISRUPTION PHENOTYPE</scope>
</reference>
<reference evidence="12" key="4">
    <citation type="journal article" date="2014" name="PLoS Genet.">
        <title>EVA-1 functions as an UNC-40 Co-receptor to enhance attraction to the MADD-4 guidance cue in Caenorhabditis elegans.</title>
        <authorList>
            <person name="Chan K.K."/>
            <person name="Seetharaman A."/>
            <person name="Bagg R."/>
            <person name="Selman G."/>
            <person name="Zhang Y."/>
            <person name="Kim J."/>
            <person name="Roy P.J."/>
        </authorList>
    </citation>
    <scope>FUNCTION</scope>
    <scope>INTERACTION WITH EVA-1; UNC-40 AND UNC-5</scope>
</reference>
<reference evidence="12" key="5">
    <citation type="journal article" date="2015" name="Neuron">
        <title>C. elegans Punctin Clusters GABA(A) Receptors via Neuroligin Binding and UNC-40/DCC Recruitment.</title>
        <authorList>
            <person name="Tu H."/>
            <person name="Pinan-Lucarre B."/>
            <person name="Ji T."/>
            <person name="Jospin M."/>
            <person name="Bessereau J.L."/>
        </authorList>
    </citation>
    <scope>FUNCTION</scope>
    <scope>INTERACTION WITH NLG-1 AND UNC-40</scope>
    <scope>DISRUPTION PHENOTYPE</scope>
</reference>
<reference evidence="12" key="6">
    <citation type="journal article" date="2015" name="Neuron">
        <title>MADD-4/Punctin and Neurexin Organize C. elegans GABAergic Postsynapses through Neuroligin.</title>
        <authorList>
            <person name="Maro G.S."/>
            <person name="Gao S."/>
            <person name="Olechwier A.M."/>
            <person name="Hung W.L."/>
            <person name="Liu M."/>
            <person name="Oezkan E."/>
            <person name="Zhen M."/>
            <person name="Shen K."/>
        </authorList>
    </citation>
    <scope>FUNCTION</scope>
    <scope>INTERACTION WITH NLG-1 AND NRX-1</scope>
</reference>